<name>CU67B_LOCMI</name>
<comment type="function">
    <text>Component of the cuticle of migratory locust which contains more than 100 different structural proteins.</text>
</comment>
<comment type="domain">
    <text>The tetrapeptide (A-A-P-[AV]) repeats found throughout the protein are also present in many proteins constituting the protective envelope of other species.</text>
</comment>
<reference key="1">
    <citation type="journal article" date="1993" name="Eur. J. Biochem.">
        <title>Combined plasma-desorption mass spectrometry and Edman degradation applied to simultaneous sequence determination of isoforms of structural proteins from the cuticle of Locusta migratoria.</title>
        <authorList>
            <person name="Andreasen L."/>
            <person name="Hoejrup P."/>
            <person name="Andersen S.O."/>
            <person name="Roepstorff P."/>
        </authorList>
    </citation>
    <scope>PROTEIN SEQUENCE</scope>
</reference>
<sequence>GYLGGYAAPAISYAAPAVSYAAPAVAYAAPAAVAPAALTSQSSNILRSYGNLGQVSTYTKTVDTPYSSVTKSDVRVSNDAIAHVAAPALAYAAPAAYAAPAYYH</sequence>
<accession>P80233</accession>
<feature type="chain" id="PRO_0000196111" description="Cuticle protein 67, isoform B">
    <location>
        <begin position="1"/>
        <end position="104"/>
    </location>
</feature>
<feature type="repeat" description="1">
    <location>
        <begin position="7"/>
        <end position="10"/>
    </location>
</feature>
<feature type="repeat" description="2">
    <location>
        <begin position="14"/>
        <end position="17"/>
    </location>
</feature>
<feature type="repeat" description="3">
    <location>
        <begin position="21"/>
        <end position="24"/>
    </location>
</feature>
<feature type="repeat" description="4">
    <location>
        <begin position="28"/>
        <end position="31"/>
    </location>
</feature>
<feature type="repeat" description="5">
    <location>
        <begin position="85"/>
        <end position="88"/>
    </location>
</feature>
<feature type="repeat" description="6">
    <location>
        <begin position="92"/>
        <end position="95"/>
    </location>
</feature>
<feature type="repeat" description="7">
    <location>
        <begin position="98"/>
        <end position="101"/>
    </location>
</feature>
<keyword id="KW-0193">Cuticle</keyword>
<keyword id="KW-0903">Direct protein sequencing</keyword>
<keyword id="KW-0677">Repeat</keyword>
<protein>
    <recommendedName>
        <fullName>Cuticle protein 67, isoform B</fullName>
    </recommendedName>
    <alternativeName>
        <fullName>LM-ACP 67B</fullName>
        <shortName>LM-67B</shortName>
    </alternativeName>
</protein>
<proteinExistence type="evidence at protein level"/>
<dbReference type="PIR" id="S38268">
    <property type="entry name" value="S38268"/>
</dbReference>
<dbReference type="GO" id="GO:0042302">
    <property type="term" value="F:structural constituent of cuticle"/>
    <property type="evidence" value="ECO:0007669"/>
    <property type="project" value="UniProtKB-KW"/>
</dbReference>
<dbReference type="InterPro" id="IPR022727">
    <property type="entry name" value="Cuticle_C1"/>
</dbReference>
<dbReference type="PANTHER" id="PTHR39068">
    <property type="entry name" value="LARVAL/PUPAL CUTICLE PROTEIN H1C-LIKE PROTEIN-RELATED"/>
    <property type="match status" value="1"/>
</dbReference>
<dbReference type="Pfam" id="PF11018">
    <property type="entry name" value="Cuticle_3"/>
    <property type="match status" value="1"/>
</dbReference>
<organism>
    <name type="scientific">Locusta migratoria</name>
    <name type="common">Migratory locust</name>
    <dbReference type="NCBI Taxonomy" id="7004"/>
    <lineage>
        <taxon>Eukaryota</taxon>
        <taxon>Metazoa</taxon>
        <taxon>Ecdysozoa</taxon>
        <taxon>Arthropoda</taxon>
        <taxon>Hexapoda</taxon>
        <taxon>Insecta</taxon>
        <taxon>Pterygota</taxon>
        <taxon>Neoptera</taxon>
        <taxon>Polyneoptera</taxon>
        <taxon>Orthoptera</taxon>
        <taxon>Caelifera</taxon>
        <taxon>Acrididea</taxon>
        <taxon>Acridomorpha</taxon>
        <taxon>Acridoidea</taxon>
        <taxon>Acrididae</taxon>
        <taxon>Oedipodinae</taxon>
        <taxon>Locusta</taxon>
    </lineage>
</organism>